<feature type="chain" id="PRO_0000102826" description="Succinate--CoA ligase [ADP-forming] subunit beta">
    <location>
        <begin position="1"/>
        <end position="386"/>
    </location>
</feature>
<feature type="domain" description="ATP-grasp" evidence="1">
    <location>
        <begin position="9"/>
        <end position="244"/>
    </location>
</feature>
<feature type="binding site" evidence="1">
    <location>
        <position position="46"/>
    </location>
    <ligand>
        <name>ATP</name>
        <dbReference type="ChEBI" id="CHEBI:30616"/>
    </ligand>
</feature>
<feature type="binding site" evidence="1">
    <location>
        <begin position="53"/>
        <end position="55"/>
    </location>
    <ligand>
        <name>ATP</name>
        <dbReference type="ChEBI" id="CHEBI:30616"/>
    </ligand>
</feature>
<feature type="binding site" evidence="1">
    <location>
        <position position="102"/>
    </location>
    <ligand>
        <name>ATP</name>
        <dbReference type="ChEBI" id="CHEBI:30616"/>
    </ligand>
</feature>
<feature type="binding site" evidence="1">
    <location>
        <position position="107"/>
    </location>
    <ligand>
        <name>ATP</name>
        <dbReference type="ChEBI" id="CHEBI:30616"/>
    </ligand>
</feature>
<feature type="binding site" evidence="1">
    <location>
        <position position="199"/>
    </location>
    <ligand>
        <name>Mg(2+)</name>
        <dbReference type="ChEBI" id="CHEBI:18420"/>
    </ligand>
</feature>
<feature type="binding site" evidence="1">
    <location>
        <position position="213"/>
    </location>
    <ligand>
        <name>Mg(2+)</name>
        <dbReference type="ChEBI" id="CHEBI:18420"/>
    </ligand>
</feature>
<feature type="binding site" evidence="1">
    <location>
        <position position="264"/>
    </location>
    <ligand>
        <name>substrate</name>
        <note>ligand shared with subunit alpha</note>
    </ligand>
</feature>
<feature type="binding site" evidence="1">
    <location>
        <begin position="321"/>
        <end position="323"/>
    </location>
    <ligand>
        <name>substrate</name>
        <note>ligand shared with subunit alpha</note>
    </ligand>
</feature>
<gene>
    <name evidence="1" type="primary">sucC</name>
    <name type="ordered locus">CPn_0973</name>
    <name type="ordered locus">CP_0886</name>
    <name type="ordered locus">CpB1009</name>
</gene>
<accession>Q9Z6T6</accession>
<comment type="function">
    <text evidence="1">Succinyl-CoA synthetase functions in the citric acid cycle (TCA), coupling the hydrolysis of succinyl-CoA to the synthesis of either ATP or GTP and thus represents the only step of substrate-level phosphorylation in the TCA. The beta subunit provides nucleotide specificity of the enzyme and binds the substrate succinate, while the binding sites for coenzyme A and phosphate are found in the alpha subunit.</text>
</comment>
<comment type="catalytic activity">
    <reaction evidence="1">
        <text>succinate + ATP + CoA = succinyl-CoA + ADP + phosphate</text>
        <dbReference type="Rhea" id="RHEA:17661"/>
        <dbReference type="ChEBI" id="CHEBI:30031"/>
        <dbReference type="ChEBI" id="CHEBI:30616"/>
        <dbReference type="ChEBI" id="CHEBI:43474"/>
        <dbReference type="ChEBI" id="CHEBI:57287"/>
        <dbReference type="ChEBI" id="CHEBI:57292"/>
        <dbReference type="ChEBI" id="CHEBI:456216"/>
        <dbReference type="EC" id="6.2.1.5"/>
    </reaction>
    <physiologicalReaction direction="right-to-left" evidence="1">
        <dbReference type="Rhea" id="RHEA:17663"/>
    </physiologicalReaction>
</comment>
<comment type="catalytic activity">
    <reaction evidence="1">
        <text>GTP + succinate + CoA = succinyl-CoA + GDP + phosphate</text>
        <dbReference type="Rhea" id="RHEA:22120"/>
        <dbReference type="ChEBI" id="CHEBI:30031"/>
        <dbReference type="ChEBI" id="CHEBI:37565"/>
        <dbReference type="ChEBI" id="CHEBI:43474"/>
        <dbReference type="ChEBI" id="CHEBI:57287"/>
        <dbReference type="ChEBI" id="CHEBI:57292"/>
        <dbReference type="ChEBI" id="CHEBI:58189"/>
    </reaction>
    <physiologicalReaction direction="right-to-left" evidence="1">
        <dbReference type="Rhea" id="RHEA:22122"/>
    </physiologicalReaction>
</comment>
<comment type="cofactor">
    <cofactor evidence="1">
        <name>Mg(2+)</name>
        <dbReference type="ChEBI" id="CHEBI:18420"/>
    </cofactor>
    <text evidence="1">Binds 1 Mg(2+) ion per subunit.</text>
</comment>
<comment type="pathway">
    <text evidence="1">Carbohydrate metabolism; tricarboxylic acid cycle; succinate from succinyl-CoA (ligase route): step 1/1.</text>
</comment>
<comment type="subunit">
    <text evidence="1">Heterotetramer of two alpha and two beta subunits.</text>
</comment>
<comment type="similarity">
    <text evidence="1">Belongs to the succinate/malate CoA ligase beta subunit family.</text>
</comment>
<name>SUCC_CHLPN</name>
<proteinExistence type="inferred from homology"/>
<keyword id="KW-0067">ATP-binding</keyword>
<keyword id="KW-0436">Ligase</keyword>
<keyword id="KW-0460">Magnesium</keyword>
<keyword id="KW-0479">Metal-binding</keyword>
<keyword id="KW-0547">Nucleotide-binding</keyword>
<keyword id="KW-0816">Tricarboxylic acid cycle</keyword>
<reference key="1">
    <citation type="journal article" date="1999" name="Nat. Genet.">
        <title>Comparative genomes of Chlamydia pneumoniae and C. trachomatis.</title>
        <authorList>
            <person name="Kalman S."/>
            <person name="Mitchell W.P."/>
            <person name="Marathe R."/>
            <person name="Lammel C.J."/>
            <person name="Fan J."/>
            <person name="Hyman R.W."/>
            <person name="Olinger L."/>
            <person name="Grimwood J."/>
            <person name="Davis R.W."/>
            <person name="Stephens R.S."/>
        </authorList>
    </citation>
    <scope>NUCLEOTIDE SEQUENCE [LARGE SCALE GENOMIC DNA]</scope>
    <source>
        <strain>CWL029</strain>
    </source>
</reference>
<reference key="2">
    <citation type="journal article" date="2000" name="Nucleic Acids Res.">
        <title>Genome sequences of Chlamydia trachomatis MoPn and Chlamydia pneumoniae AR39.</title>
        <authorList>
            <person name="Read T.D."/>
            <person name="Brunham R.C."/>
            <person name="Shen C."/>
            <person name="Gill S.R."/>
            <person name="Heidelberg J.F."/>
            <person name="White O."/>
            <person name="Hickey E.K."/>
            <person name="Peterson J.D."/>
            <person name="Utterback T.R."/>
            <person name="Berry K.J."/>
            <person name="Bass S."/>
            <person name="Linher K.D."/>
            <person name="Weidman J.F."/>
            <person name="Khouri H.M."/>
            <person name="Craven B."/>
            <person name="Bowman C."/>
            <person name="Dodson R.J."/>
            <person name="Gwinn M.L."/>
            <person name="Nelson W.C."/>
            <person name="DeBoy R.T."/>
            <person name="Kolonay J.F."/>
            <person name="McClarty G."/>
            <person name="Salzberg S.L."/>
            <person name="Eisen J.A."/>
            <person name="Fraser C.M."/>
        </authorList>
    </citation>
    <scope>NUCLEOTIDE SEQUENCE [LARGE SCALE GENOMIC DNA]</scope>
    <source>
        <strain>AR39</strain>
    </source>
</reference>
<reference key="3">
    <citation type="journal article" date="2000" name="Nucleic Acids Res.">
        <title>Comparison of whole genome sequences of Chlamydia pneumoniae J138 from Japan and CWL029 from USA.</title>
        <authorList>
            <person name="Shirai M."/>
            <person name="Hirakawa H."/>
            <person name="Kimoto M."/>
            <person name="Tabuchi M."/>
            <person name="Kishi F."/>
            <person name="Ouchi K."/>
            <person name="Shiba T."/>
            <person name="Ishii K."/>
            <person name="Hattori M."/>
            <person name="Kuhara S."/>
            <person name="Nakazawa T."/>
        </authorList>
    </citation>
    <scope>NUCLEOTIDE SEQUENCE [LARGE SCALE GENOMIC DNA]</scope>
    <source>
        <strain>J138</strain>
    </source>
</reference>
<reference key="4">
    <citation type="submission" date="2002-05" db="EMBL/GenBank/DDBJ databases">
        <title>The genome sequence of Chlamydia pneumoniae TW183 and comparison with other Chlamydia strains based on whole genome sequence analysis.</title>
        <authorList>
            <person name="Geng M.M."/>
            <person name="Schuhmacher A."/>
            <person name="Muehldorfer I."/>
            <person name="Bensch K.W."/>
            <person name="Schaefer K.P."/>
            <person name="Schneider S."/>
            <person name="Pohl T."/>
            <person name="Essig A."/>
            <person name="Marre R."/>
            <person name="Melchers K."/>
        </authorList>
    </citation>
    <scope>NUCLEOTIDE SEQUENCE [LARGE SCALE GENOMIC DNA]</scope>
    <source>
        <strain>TW-183</strain>
    </source>
</reference>
<dbReference type="EC" id="6.2.1.5" evidence="1"/>
<dbReference type="EMBL" id="AE001363">
    <property type="protein sequence ID" value="AAD19110.1"/>
    <property type="molecule type" value="Genomic_DNA"/>
</dbReference>
<dbReference type="EMBL" id="AE002161">
    <property type="protein sequence ID" value="AAF38674.1"/>
    <property type="molecule type" value="Genomic_DNA"/>
</dbReference>
<dbReference type="EMBL" id="BA000008">
    <property type="protein sequence ID" value="BAA99180.1"/>
    <property type="molecule type" value="Genomic_DNA"/>
</dbReference>
<dbReference type="EMBL" id="AE009440">
    <property type="protein sequence ID" value="AAP98938.1"/>
    <property type="molecule type" value="Genomic_DNA"/>
</dbReference>
<dbReference type="PIR" id="B86612">
    <property type="entry name" value="B86612"/>
</dbReference>
<dbReference type="PIR" id="C72013">
    <property type="entry name" value="C72013"/>
</dbReference>
<dbReference type="RefSeq" id="NP_225167.1">
    <property type="nucleotide sequence ID" value="NC_000922.1"/>
</dbReference>
<dbReference type="RefSeq" id="WP_010883606.1">
    <property type="nucleotide sequence ID" value="NZ_LN847257.1"/>
</dbReference>
<dbReference type="SMR" id="Q9Z6T6"/>
<dbReference type="STRING" id="406984.CPK_ORF00387"/>
<dbReference type="GeneID" id="45051029"/>
<dbReference type="KEGG" id="cpa:CP_0886"/>
<dbReference type="KEGG" id="cpj:sucC"/>
<dbReference type="KEGG" id="cpn:CPn_0973"/>
<dbReference type="KEGG" id="cpt:CpB1009"/>
<dbReference type="PATRIC" id="fig|115713.3.peg.1065"/>
<dbReference type="eggNOG" id="COG0045">
    <property type="taxonomic scope" value="Bacteria"/>
</dbReference>
<dbReference type="HOGENOM" id="CLU_037430_0_2_0"/>
<dbReference type="OrthoDB" id="9802602at2"/>
<dbReference type="UniPathway" id="UPA00223">
    <property type="reaction ID" value="UER00999"/>
</dbReference>
<dbReference type="Proteomes" id="UP000000583">
    <property type="component" value="Chromosome"/>
</dbReference>
<dbReference type="Proteomes" id="UP000000801">
    <property type="component" value="Chromosome"/>
</dbReference>
<dbReference type="GO" id="GO:0005829">
    <property type="term" value="C:cytosol"/>
    <property type="evidence" value="ECO:0007669"/>
    <property type="project" value="TreeGrafter"/>
</dbReference>
<dbReference type="GO" id="GO:0042709">
    <property type="term" value="C:succinate-CoA ligase complex"/>
    <property type="evidence" value="ECO:0007669"/>
    <property type="project" value="TreeGrafter"/>
</dbReference>
<dbReference type="GO" id="GO:0005524">
    <property type="term" value="F:ATP binding"/>
    <property type="evidence" value="ECO:0007669"/>
    <property type="project" value="UniProtKB-UniRule"/>
</dbReference>
<dbReference type="GO" id="GO:0000287">
    <property type="term" value="F:magnesium ion binding"/>
    <property type="evidence" value="ECO:0007669"/>
    <property type="project" value="UniProtKB-UniRule"/>
</dbReference>
<dbReference type="GO" id="GO:0004775">
    <property type="term" value="F:succinate-CoA ligase (ADP-forming) activity"/>
    <property type="evidence" value="ECO:0007669"/>
    <property type="project" value="UniProtKB-UniRule"/>
</dbReference>
<dbReference type="GO" id="GO:0004776">
    <property type="term" value="F:succinate-CoA ligase (GDP-forming) activity"/>
    <property type="evidence" value="ECO:0007669"/>
    <property type="project" value="RHEA"/>
</dbReference>
<dbReference type="GO" id="GO:0006104">
    <property type="term" value="P:succinyl-CoA metabolic process"/>
    <property type="evidence" value="ECO:0007669"/>
    <property type="project" value="TreeGrafter"/>
</dbReference>
<dbReference type="GO" id="GO:0006099">
    <property type="term" value="P:tricarboxylic acid cycle"/>
    <property type="evidence" value="ECO:0007669"/>
    <property type="project" value="UniProtKB-UniRule"/>
</dbReference>
<dbReference type="FunFam" id="3.30.470.20:FF:000002">
    <property type="entry name" value="Succinate--CoA ligase [ADP-forming] subunit beta"/>
    <property type="match status" value="1"/>
</dbReference>
<dbReference type="FunFam" id="3.40.50.261:FF:000001">
    <property type="entry name" value="Succinate--CoA ligase [ADP-forming] subunit beta"/>
    <property type="match status" value="1"/>
</dbReference>
<dbReference type="Gene3D" id="3.30.1490.20">
    <property type="entry name" value="ATP-grasp fold, A domain"/>
    <property type="match status" value="1"/>
</dbReference>
<dbReference type="Gene3D" id="3.30.470.20">
    <property type="entry name" value="ATP-grasp fold, B domain"/>
    <property type="match status" value="1"/>
</dbReference>
<dbReference type="Gene3D" id="3.40.50.261">
    <property type="entry name" value="Succinyl-CoA synthetase domains"/>
    <property type="match status" value="1"/>
</dbReference>
<dbReference type="HAMAP" id="MF_00558">
    <property type="entry name" value="Succ_CoA_beta"/>
    <property type="match status" value="1"/>
</dbReference>
<dbReference type="InterPro" id="IPR011761">
    <property type="entry name" value="ATP-grasp"/>
</dbReference>
<dbReference type="InterPro" id="IPR013650">
    <property type="entry name" value="ATP-grasp_succ-CoA_synth-type"/>
</dbReference>
<dbReference type="InterPro" id="IPR013815">
    <property type="entry name" value="ATP_grasp_subdomain_1"/>
</dbReference>
<dbReference type="InterPro" id="IPR017866">
    <property type="entry name" value="Succ-CoA_synthase_bsu_CS"/>
</dbReference>
<dbReference type="InterPro" id="IPR005811">
    <property type="entry name" value="SUCC_ACL_C"/>
</dbReference>
<dbReference type="InterPro" id="IPR005809">
    <property type="entry name" value="Succ_CoA_ligase-like_bsu"/>
</dbReference>
<dbReference type="InterPro" id="IPR016102">
    <property type="entry name" value="Succinyl-CoA_synth-like"/>
</dbReference>
<dbReference type="NCBIfam" id="NF001913">
    <property type="entry name" value="PRK00696.1"/>
    <property type="match status" value="1"/>
</dbReference>
<dbReference type="NCBIfam" id="TIGR01016">
    <property type="entry name" value="sucCoAbeta"/>
    <property type="match status" value="1"/>
</dbReference>
<dbReference type="PANTHER" id="PTHR11815:SF10">
    <property type="entry name" value="SUCCINATE--COA LIGASE [GDP-FORMING] SUBUNIT BETA, MITOCHONDRIAL"/>
    <property type="match status" value="1"/>
</dbReference>
<dbReference type="PANTHER" id="PTHR11815">
    <property type="entry name" value="SUCCINYL-COA SYNTHETASE BETA CHAIN"/>
    <property type="match status" value="1"/>
</dbReference>
<dbReference type="Pfam" id="PF08442">
    <property type="entry name" value="ATP-grasp_2"/>
    <property type="match status" value="1"/>
</dbReference>
<dbReference type="Pfam" id="PF00549">
    <property type="entry name" value="Ligase_CoA"/>
    <property type="match status" value="1"/>
</dbReference>
<dbReference type="PIRSF" id="PIRSF001554">
    <property type="entry name" value="SucCS_beta"/>
    <property type="match status" value="1"/>
</dbReference>
<dbReference type="SUPFAM" id="SSF56059">
    <property type="entry name" value="Glutathione synthetase ATP-binding domain-like"/>
    <property type="match status" value="1"/>
</dbReference>
<dbReference type="SUPFAM" id="SSF52210">
    <property type="entry name" value="Succinyl-CoA synthetase domains"/>
    <property type="match status" value="1"/>
</dbReference>
<dbReference type="PROSITE" id="PS50975">
    <property type="entry name" value="ATP_GRASP"/>
    <property type="match status" value="1"/>
</dbReference>
<dbReference type="PROSITE" id="PS01217">
    <property type="entry name" value="SUCCINYL_COA_LIG_3"/>
    <property type="match status" value="1"/>
</dbReference>
<protein>
    <recommendedName>
        <fullName evidence="1">Succinate--CoA ligase [ADP-forming] subunit beta</fullName>
        <ecNumber evidence="1">6.2.1.5</ecNumber>
    </recommendedName>
    <alternativeName>
        <fullName evidence="1">Succinyl-CoA synthetase subunit beta</fullName>
        <shortName evidence="1">SCS-beta</shortName>
    </alternativeName>
</protein>
<sequence>MHLHEYQAKDLLASYDVPIPPYWVVSSEEEGELLITKSGLDSAVVKVQVHAGGRGKHGGVIVAKSSAGILQAVAKLLGMHFTSNQTADGFLPVEKVLISPLVAIQREYYVAVIMDRKHRCPVLMLSKAGGMDIEEVAHSSPEQILTLPLTSYGHIYSYQLRQATKFMEWEGEVMHQGVQLIKKLAKCFYENDVSLLEINPLVLTLEGELLVLDSKITIDDNALYRHPNLEVLYDPSQENVRDVLAKQIGLSYIALSGNIGCIVNGAGLAMSTLDILKLHGGNAANFLDVGGGASQKQIQEAVSLVLSDESVKVLFINIFGGIMDCSVVASGLVAVMETRDQVVPTVIRLEGTNVELGKEIVQQSGIPCQFVSSMEEGARRAVELSM</sequence>
<organism>
    <name type="scientific">Chlamydia pneumoniae</name>
    <name type="common">Chlamydophila pneumoniae</name>
    <dbReference type="NCBI Taxonomy" id="83558"/>
    <lineage>
        <taxon>Bacteria</taxon>
        <taxon>Pseudomonadati</taxon>
        <taxon>Chlamydiota</taxon>
        <taxon>Chlamydiia</taxon>
        <taxon>Chlamydiales</taxon>
        <taxon>Chlamydiaceae</taxon>
        <taxon>Chlamydia/Chlamydophila group</taxon>
        <taxon>Chlamydia</taxon>
    </lineage>
</organism>
<evidence type="ECO:0000255" key="1">
    <source>
        <dbReference type="HAMAP-Rule" id="MF_00558"/>
    </source>
</evidence>